<protein>
    <recommendedName>
        <fullName>Phosphomutase-like protein 3</fullName>
    </recommendedName>
    <alternativeName>
        <fullName>Predicted GPI-anchored protein 12</fullName>
    </alternativeName>
</protein>
<sequence length="315" mass="35799">MQQFLTLGALWTLFNVATTISLPKYSSSQTYFAQSDPNIPVSQVDDTNNFGLKSQYSWDDVVSNLASNEKLFFLQRHGQGWHNVAPSNFSRVDWNCYWAEQSGRDGVVWEDAELTPKGVQQIQNLHQRIKDTPDFPQPEKFFVSPLRRTLQTWNITWNGLPHKTPLIKEFAREIYGIDSESKRHNKTFIHNYVPSFEFESGFTEQDENWSPDKSESDQHCDYRAAVLLQDIFNDSPDEKVISVVLHSGIIYCLLDVVGHRYFPMATGGAIPVVIAIENYNTDYPLNDAWDTFKDWCPNPPASISGTATSTATGSA</sequence>
<reference key="1">
    <citation type="journal article" date="2004" name="Proc. Natl. Acad. Sci. U.S.A.">
        <title>The diploid genome sequence of Candida albicans.</title>
        <authorList>
            <person name="Jones T."/>
            <person name="Federspiel N.A."/>
            <person name="Chibana H."/>
            <person name="Dungan J."/>
            <person name="Kalman S."/>
            <person name="Magee B.B."/>
            <person name="Newport G."/>
            <person name="Thorstenson Y.R."/>
            <person name="Agabian N."/>
            <person name="Magee P.T."/>
            <person name="Davis R.W."/>
            <person name="Scherer S."/>
        </authorList>
    </citation>
    <scope>NUCLEOTIDE SEQUENCE [LARGE SCALE GENOMIC DNA]</scope>
    <source>
        <strain>SC5314 / ATCC MYA-2876</strain>
    </source>
</reference>
<reference key="2">
    <citation type="journal article" date="2007" name="Genome Biol.">
        <title>Assembly of the Candida albicans genome into sixteen supercontigs aligned on the eight chromosomes.</title>
        <authorList>
            <person name="van het Hoog M."/>
            <person name="Rast T.J."/>
            <person name="Martchenko M."/>
            <person name="Grindle S."/>
            <person name="Dignard D."/>
            <person name="Hogues H."/>
            <person name="Cuomo C."/>
            <person name="Berriman M."/>
            <person name="Scherer S."/>
            <person name="Magee B.B."/>
            <person name="Whiteway M."/>
            <person name="Chibana H."/>
            <person name="Nantel A."/>
            <person name="Magee P.T."/>
        </authorList>
    </citation>
    <scope>GENOME REANNOTATION</scope>
    <source>
        <strain>SC5314 / ATCC MYA-2876</strain>
    </source>
</reference>
<reference key="3">
    <citation type="journal article" date="2013" name="Genome Biol.">
        <title>Assembly of a phased diploid Candida albicans genome facilitates allele-specific measurements and provides a simple model for repeat and indel structure.</title>
        <authorList>
            <person name="Muzzey D."/>
            <person name="Schwartz K."/>
            <person name="Weissman J.S."/>
            <person name="Sherlock G."/>
        </authorList>
    </citation>
    <scope>NUCLEOTIDE SEQUENCE [LARGE SCALE GENOMIC DNA]</scope>
    <scope>GENOME REANNOTATION</scope>
    <source>
        <strain>SC5314 / ATCC MYA-2876</strain>
    </source>
</reference>
<reference key="4">
    <citation type="journal article" date="2003" name="Yeast">
        <title>Genome-wide identification of fungal GPI proteins.</title>
        <authorList>
            <person name="De Groot P.W."/>
            <person name="Hellingwerf K.J."/>
            <person name="Klis F.M."/>
        </authorList>
    </citation>
    <scope>PREDICTION OF GPI-ANCHOR</scope>
</reference>
<organism>
    <name type="scientific">Candida albicans (strain SC5314 / ATCC MYA-2876)</name>
    <name type="common">Yeast</name>
    <dbReference type="NCBI Taxonomy" id="237561"/>
    <lineage>
        <taxon>Eukaryota</taxon>
        <taxon>Fungi</taxon>
        <taxon>Dikarya</taxon>
        <taxon>Ascomycota</taxon>
        <taxon>Saccharomycotina</taxon>
        <taxon>Pichiomycetes</taxon>
        <taxon>Debaryomycetaceae</taxon>
        <taxon>Candida/Lodderomyces clade</taxon>
        <taxon>Candida</taxon>
    </lineage>
</organism>
<evidence type="ECO:0000250" key="1">
    <source>
        <dbReference type="UniProtKB" id="P62707"/>
    </source>
</evidence>
<evidence type="ECO:0000255" key="2"/>
<evidence type="ECO:0000305" key="3"/>
<dbReference type="EMBL" id="CP017630">
    <property type="protein sequence ID" value="AOW31672.1"/>
    <property type="molecule type" value="Genomic_DNA"/>
</dbReference>
<dbReference type="RefSeq" id="XP_719359.1">
    <property type="nucleotide sequence ID" value="XM_714266.1"/>
</dbReference>
<dbReference type="SMR" id="Q5ACP5"/>
<dbReference type="STRING" id="237561.Q5ACP5"/>
<dbReference type="GlyCosmos" id="Q5ACP5">
    <property type="glycosylation" value="3 sites, No reported glycans"/>
</dbReference>
<dbReference type="EnsemblFungi" id="CR_10210W_A-T">
    <property type="protein sequence ID" value="CR_10210W_A-T-p1"/>
    <property type="gene ID" value="CR_10210W_A"/>
</dbReference>
<dbReference type="GeneID" id="3638920"/>
<dbReference type="KEGG" id="cal:CAALFM_CR10210WA"/>
<dbReference type="CGD" id="CAL0000174441">
    <property type="gene designation" value="PGA12"/>
</dbReference>
<dbReference type="VEuPathDB" id="FungiDB:CR_10210W_A"/>
<dbReference type="eggNOG" id="KOG4754">
    <property type="taxonomic scope" value="Eukaryota"/>
</dbReference>
<dbReference type="HOGENOM" id="CLU_039184_0_3_1"/>
<dbReference type="InParanoid" id="Q5ACP5"/>
<dbReference type="OMA" id="HGLGVHN"/>
<dbReference type="OrthoDB" id="496981at2759"/>
<dbReference type="Proteomes" id="UP000000559">
    <property type="component" value="Chromosome R"/>
</dbReference>
<dbReference type="GO" id="GO:0005737">
    <property type="term" value="C:cytoplasm"/>
    <property type="evidence" value="ECO:0000318"/>
    <property type="project" value="GO_Central"/>
</dbReference>
<dbReference type="GO" id="GO:0005576">
    <property type="term" value="C:extracellular region"/>
    <property type="evidence" value="ECO:0000314"/>
    <property type="project" value="CGD"/>
</dbReference>
<dbReference type="GO" id="GO:0005886">
    <property type="term" value="C:plasma membrane"/>
    <property type="evidence" value="ECO:0007669"/>
    <property type="project" value="UniProtKB-SubCell"/>
</dbReference>
<dbReference type="GO" id="GO:0098552">
    <property type="term" value="C:side of membrane"/>
    <property type="evidence" value="ECO:0007669"/>
    <property type="project" value="UniProtKB-KW"/>
</dbReference>
<dbReference type="GO" id="GO:0016853">
    <property type="term" value="F:isomerase activity"/>
    <property type="evidence" value="ECO:0007669"/>
    <property type="project" value="UniProtKB-KW"/>
</dbReference>
<dbReference type="GO" id="GO:0016791">
    <property type="term" value="F:phosphatase activity"/>
    <property type="evidence" value="ECO:0000318"/>
    <property type="project" value="GO_Central"/>
</dbReference>
<dbReference type="CDD" id="cd07067">
    <property type="entry name" value="HP_PGM_like"/>
    <property type="match status" value="1"/>
</dbReference>
<dbReference type="Gene3D" id="3.40.50.1240">
    <property type="entry name" value="Phosphoglycerate mutase-like"/>
    <property type="match status" value="1"/>
</dbReference>
<dbReference type="InterPro" id="IPR013078">
    <property type="entry name" value="His_Pase_superF_clade-1"/>
</dbReference>
<dbReference type="InterPro" id="IPR029033">
    <property type="entry name" value="His_PPase_superfam"/>
</dbReference>
<dbReference type="InterPro" id="IPR050275">
    <property type="entry name" value="PGM_Phosphatase"/>
</dbReference>
<dbReference type="PANTHER" id="PTHR48100">
    <property type="entry name" value="BROAD-SPECIFICITY PHOSPHATASE YOR283W-RELATED"/>
    <property type="match status" value="1"/>
</dbReference>
<dbReference type="PANTHER" id="PTHR48100:SF1">
    <property type="entry name" value="HISTIDINE PHOSPHATASE FAMILY PROTEIN-RELATED"/>
    <property type="match status" value="1"/>
</dbReference>
<dbReference type="Pfam" id="PF00300">
    <property type="entry name" value="His_Phos_1"/>
    <property type="match status" value="1"/>
</dbReference>
<dbReference type="SUPFAM" id="SSF53254">
    <property type="entry name" value="Phosphoglycerate mutase-like"/>
    <property type="match status" value="1"/>
</dbReference>
<dbReference type="PROSITE" id="PS00175">
    <property type="entry name" value="PG_MUTASE"/>
    <property type="match status" value="1"/>
</dbReference>
<accession>Q5ACP5</accession>
<accession>A0A1D8PU65</accession>
<feature type="signal peptide" evidence="2">
    <location>
        <begin position="1"/>
        <end position="19"/>
    </location>
</feature>
<feature type="chain" id="PRO_0000424656" description="Phosphomutase-like protein 3">
    <location>
        <begin position="20"/>
        <end position="286"/>
    </location>
</feature>
<feature type="propeptide" id="PRO_0000424657" description="Removed in mature form" evidence="2">
    <location>
        <begin position="287"/>
        <end position="315"/>
    </location>
</feature>
<feature type="active site" description="Tele-phosphohistidine intermediate" evidence="1">
    <location>
        <position position="77"/>
    </location>
</feature>
<feature type="active site" description="Proton donor/acceptor" evidence="1">
    <location>
        <position position="173"/>
    </location>
</feature>
<feature type="site" description="Transition state stabilizer" evidence="1">
    <location>
        <position position="246"/>
    </location>
</feature>
<feature type="lipid moiety-binding region" description="GPI-anchor amidated asparagine" evidence="2">
    <location>
        <position position="286"/>
    </location>
</feature>
<feature type="glycosylation site" description="N-linked (GlcNAc...) asparagine" evidence="2">
    <location>
        <position position="88"/>
    </location>
</feature>
<feature type="glycosylation site" description="N-linked (GlcNAc...) asparagine" evidence="2">
    <location>
        <position position="154"/>
    </location>
</feature>
<feature type="glycosylation site" description="N-linked (GlcNAc...) asparagine" evidence="2">
    <location>
        <position position="185"/>
    </location>
</feature>
<keyword id="KW-1003">Cell membrane</keyword>
<keyword id="KW-0325">Glycoprotein</keyword>
<keyword id="KW-0336">GPI-anchor</keyword>
<keyword id="KW-0413">Isomerase</keyword>
<keyword id="KW-0449">Lipoprotein</keyword>
<keyword id="KW-0472">Membrane</keyword>
<keyword id="KW-1185">Reference proteome</keyword>
<keyword id="KW-0732">Signal</keyword>
<proteinExistence type="evidence at protein level"/>
<name>PGA12_CANAL</name>
<gene>
    <name type="primary">PGA12</name>
    <name type="synonym">PMU3</name>
    <name type="ordered locus">CAALFM_CR10210WA</name>
    <name type="ORF">CaO19.7597</name>
</gene>
<comment type="subcellular location">
    <subcellularLocation>
        <location evidence="3">Cell membrane</location>
        <topology evidence="3">Lipid-anchor</topology>
        <topology evidence="3">GPI-anchor</topology>
    </subcellularLocation>
</comment>
<comment type="similarity">
    <text evidence="3">Belongs to the phosphoglycerate mutase family.</text>
</comment>